<name>VKTHD_DENAN</name>
<reference key="1">
    <citation type="journal article" date="1980" name="Hoppe-Seyler's Z. Physiol. Chem.">
        <title>Snake venoms. The amino acid sequences of two proteinase inhibitor homologues from Dendroaspis angusticeps venom.</title>
        <authorList>
            <person name="Joubert F.J."/>
            <person name="Taljaard N."/>
        </authorList>
    </citation>
    <scope>PROTEIN SEQUENCE</scope>
</reference>
<reference key="2">
    <citation type="journal article" date="1988" name="Mol. Pharmacol.">
        <title>Four polypeptide components of green mamba venom selectively block certain potassium channels in rat brain synaptosomes.</title>
        <authorList>
            <person name="Benishin C.G."/>
            <person name="Sorensen R.G."/>
            <person name="Brown W.E."/>
            <person name="Krueger B.K."/>
            <person name="Blaustein M.P."/>
        </authorList>
    </citation>
    <scope>PROTEIN SEQUENCE</scope>
</reference>
<reference key="3">
    <citation type="journal article" date="2000" name="J. Mol. Biol.">
        <title>Energetic and structural interactions between delta-dendrotoxin and a voltage-gated potassium channel.</title>
        <authorList>
            <person name="Imredy J.P."/>
            <person name="MacKinnon R."/>
        </authorList>
    </citation>
    <scope>FUNCTION</scope>
    <scope>MUTAGENESIS OF ALA-1; LYS-3; TYR-4; LYS-6; LEU-7; PRO-8; VAL-9; ARG-10; TYR-11; PRO-13; LYS-15; LYS-16; LYS-17; LYS-24; TRP-25; LYS-26; LYS-28; LEU-31; ASP-34; ASN-41; ALA-42; ARG-44; LYS-46; GLU-49; GLU-50; ARG-52; ARG-53 AND THR-54</scope>
    <scope>SITE LYS-3; TYR-4; LYS-6; LEU-7; PRO-8; ARG-10 AND LYS-26</scope>
</reference>
<feature type="chain" id="PRO_0000155432" description="Kunitz-type serine protease inhibitor homolog delta-dendrotoxin">
    <location>
        <begin position="1"/>
        <end position="57"/>
    </location>
</feature>
<feature type="domain" description="BPTI/Kunitz inhibitor" evidence="1">
    <location>
        <begin position="5"/>
        <end position="55"/>
    </location>
</feature>
<feature type="site" description="Important for binding to potassium channels">
    <location>
        <position position="3"/>
    </location>
</feature>
<feature type="site" description="Important for binding to potassium channels">
    <location>
        <position position="4"/>
    </location>
</feature>
<feature type="site" description="Important for binding to potassium channels">
    <location>
        <position position="6"/>
    </location>
</feature>
<feature type="site" description="May be important for binding to potassium channels">
    <location>
        <position position="7"/>
    </location>
</feature>
<feature type="site" description="Important for binding to potassium channels">
    <location>
        <position position="8"/>
    </location>
</feature>
<feature type="site" description="Important for binding to potassium channels">
    <location>
        <position position="10"/>
    </location>
</feature>
<feature type="site" description="Important for binding to potassium channels">
    <location>
        <position position="26"/>
    </location>
</feature>
<feature type="disulfide bond" evidence="1">
    <location>
        <begin position="5"/>
        <end position="55"/>
    </location>
</feature>
<feature type="disulfide bond" evidence="1">
    <location>
        <begin position="14"/>
        <end position="38"/>
    </location>
</feature>
<feature type="disulfide bond" evidence="1">
    <location>
        <begin position="30"/>
        <end position="51"/>
    </location>
</feature>
<feature type="mutagenesis site" description="Decrease in binding affinity for Kv." evidence="2">
    <original>A</original>
    <variation>Q</variation>
    <location>
        <position position="1"/>
    </location>
</feature>
<feature type="mutagenesis site" description="Important decrease in binding affinity for Kv.so." evidence="2">
    <original>K</original>
    <variation>A</variation>
    <location>
        <position position="3"/>
    </location>
</feature>
<feature type="mutagenesis site" description="Important decrease in binding affinity for Kv." evidence="2">
    <original>Y</original>
    <variation>A</variation>
    <location>
        <position position="4"/>
    </location>
</feature>
<feature type="mutagenesis site" description="Important decrease in binding affinity for Kv." evidence="2">
    <original>K</original>
    <variation>A</variation>
    <location>
        <position position="6"/>
    </location>
</feature>
<feature type="mutagenesis site" description="No change in binding affinity for Kv." evidence="2">
    <original>L</original>
    <variation>A</variation>
    <location>
        <position position="7"/>
    </location>
</feature>
<feature type="mutagenesis site" description="Important decrease in binding affinity for Kv." evidence="2">
    <original>P</original>
    <variation>A</variation>
    <location>
        <position position="8"/>
    </location>
</feature>
<feature type="mutagenesis site" description="Slight increase in binding affinity for Kv." evidence="2">
    <original>V</original>
    <variation>A</variation>
    <location>
        <position position="9"/>
    </location>
</feature>
<feature type="mutagenesis site" description="Important decrease in binding affinity for Kv." evidence="2">
    <original>R</original>
    <variation>A</variation>
    <location>
        <position position="10"/>
    </location>
</feature>
<feature type="mutagenesis site" description="No change in binding affinity for Kv." evidence="2">
    <original>Y</original>
    <variation>A</variation>
    <location>
        <position position="11"/>
    </location>
</feature>
<feature type="mutagenesis site" description="Slight decrease in binding affinity for Kv." evidence="2">
    <original>P</original>
    <variation>A</variation>
    <location>
        <position position="13"/>
    </location>
</feature>
<feature type="mutagenesis site" description="Slight decrease in binding affinity for Kv." evidence="2">
    <original>K</original>
    <variation>A</variation>
    <location>
        <position position="15"/>
    </location>
</feature>
<feature type="mutagenesis site" description="Increase in binding affinity for Kv." evidence="2">
    <original>K</original>
    <variation>A</variation>
    <location>
        <position position="16"/>
    </location>
</feature>
<feature type="mutagenesis site" description="No change in binding affinity for Kv." evidence="2">
    <original>K</original>
    <variation>A</variation>
    <location>
        <position position="17"/>
    </location>
</feature>
<feature type="mutagenesis site" description="Decrease in binding affinity for Kv." evidence="2">
    <original>K</original>
    <variation>A</variation>
    <location>
        <position position="24"/>
    </location>
</feature>
<feature type="mutagenesis site" description="Decrease in binding affinity for Kv." evidence="2">
    <original>W</original>
    <variation>A</variation>
    <location>
        <position position="25"/>
    </location>
</feature>
<feature type="mutagenesis site" description="Important decrease in binding affinity for Kv." evidence="2">
    <original>K</original>
    <variation>A</variation>
    <location>
        <position position="26"/>
    </location>
</feature>
<feature type="mutagenesis site" description="Decrease in binding affinity for Kv." evidence="2">
    <original>K</original>
    <variation>A</variation>
    <location>
        <position position="28"/>
    </location>
</feature>
<feature type="mutagenesis site" description="Slight decrease in binding affinity for Kv." evidence="2">
    <original>L</original>
    <variation>A</variation>
    <location>
        <position position="31"/>
    </location>
</feature>
<feature type="mutagenesis site" description="Slight increase in binding affinity for Kv." evidence="2">
    <original>D</original>
    <variation>A</variation>
    <location>
        <position position="34"/>
    </location>
</feature>
<feature type="mutagenesis site" description="No change in binding affinity for Kv." evidence="2">
    <original>N</original>
    <variation>A</variation>
    <location>
        <position position="41"/>
    </location>
</feature>
<feature type="mutagenesis site" description="Decrease in binding affinity for Kv." evidence="2">
    <original>A</original>
    <variation>Q</variation>
    <location>
        <position position="42"/>
    </location>
</feature>
<feature type="mutagenesis site" description="Important decrease in binding affinity for Kv." evidence="2">
    <original>R</original>
    <variation>A</variation>
    <location>
        <position position="44"/>
    </location>
</feature>
<feature type="mutagenesis site" description="Decrease in binding affinity for Kv." evidence="2">
    <original>K</original>
    <variation>A</variation>
    <location>
        <position position="46"/>
    </location>
</feature>
<feature type="mutagenesis site" description="No change in binding affinity for Kv." evidence="2">
    <original>E</original>
    <variation>A</variation>
    <location>
        <position position="49"/>
    </location>
</feature>
<feature type="mutagenesis site" description="Increase in binding affinity for Kv." evidence="2">
    <original>E</original>
    <variation>A</variation>
    <location>
        <position position="50"/>
    </location>
</feature>
<feature type="mutagenesis site" description="Slight decrease in binding affinity for Kv." evidence="2">
    <original>R</original>
    <variation>A</variation>
    <location>
        <position position="52"/>
    </location>
</feature>
<feature type="mutagenesis site" description="Decrease in binding affinity for Kv." evidence="2">
    <original>R</original>
    <variation>A</variation>
    <location>
        <position position="53"/>
    </location>
</feature>
<feature type="mutagenesis site" description="Decrease in binding affinity for Kv." evidence="2">
    <original>T</original>
    <variation>A</variation>
    <location>
        <position position="54"/>
    </location>
</feature>
<comment type="function">
    <text evidence="2">Serine protease inhibitor homolog that blocks voltage-gated potassium channels (Kv).</text>
</comment>
<comment type="subcellular location">
    <subcellularLocation>
        <location>Secreted</location>
    </subcellularLocation>
</comment>
<comment type="tissue specificity">
    <text>Expressed by the venom gland.</text>
</comment>
<comment type="toxic dose">
    <text>LD(50) is 15 mg/kg by intravenous injection.</text>
</comment>
<comment type="similarity">
    <text evidence="3">Belongs to the venom Kunitz-type family.</text>
</comment>
<dbReference type="PIR" id="A91691">
    <property type="entry name" value="TIEPVA"/>
</dbReference>
<dbReference type="SMR" id="P00982"/>
<dbReference type="MEROPS" id="I02.056"/>
<dbReference type="GO" id="GO:0005615">
    <property type="term" value="C:extracellular space"/>
    <property type="evidence" value="ECO:0007669"/>
    <property type="project" value="TreeGrafter"/>
</dbReference>
<dbReference type="GO" id="GO:0015459">
    <property type="term" value="F:potassium channel regulator activity"/>
    <property type="evidence" value="ECO:0007669"/>
    <property type="project" value="UniProtKB-KW"/>
</dbReference>
<dbReference type="GO" id="GO:0004867">
    <property type="term" value="F:serine-type endopeptidase inhibitor activity"/>
    <property type="evidence" value="ECO:0007669"/>
    <property type="project" value="InterPro"/>
</dbReference>
<dbReference type="GO" id="GO:0090729">
    <property type="term" value="F:toxin activity"/>
    <property type="evidence" value="ECO:0007669"/>
    <property type="project" value="UniProtKB-KW"/>
</dbReference>
<dbReference type="CDD" id="cd22595">
    <property type="entry name" value="Kunitz_dendrotoxin"/>
    <property type="match status" value="1"/>
</dbReference>
<dbReference type="Gene3D" id="4.10.410.10">
    <property type="entry name" value="Pancreatic trypsin inhibitor Kunitz domain"/>
    <property type="match status" value="1"/>
</dbReference>
<dbReference type="InterPro" id="IPR002223">
    <property type="entry name" value="Kunitz_BPTI"/>
</dbReference>
<dbReference type="InterPro" id="IPR036880">
    <property type="entry name" value="Kunitz_BPTI_sf"/>
</dbReference>
<dbReference type="InterPro" id="IPR020901">
    <property type="entry name" value="Prtase_inh_Kunz-CS"/>
</dbReference>
<dbReference type="InterPro" id="IPR050098">
    <property type="entry name" value="TFPI/VKTCI-like"/>
</dbReference>
<dbReference type="PANTHER" id="PTHR10083:SF374">
    <property type="entry name" value="BPTI_KUNITZ INHIBITOR DOMAIN-CONTAINING PROTEIN"/>
    <property type="match status" value="1"/>
</dbReference>
<dbReference type="PANTHER" id="PTHR10083">
    <property type="entry name" value="KUNITZ-TYPE PROTEASE INHIBITOR-RELATED"/>
    <property type="match status" value="1"/>
</dbReference>
<dbReference type="Pfam" id="PF00014">
    <property type="entry name" value="Kunitz_BPTI"/>
    <property type="match status" value="1"/>
</dbReference>
<dbReference type="PRINTS" id="PR00759">
    <property type="entry name" value="BASICPTASE"/>
</dbReference>
<dbReference type="SMART" id="SM00131">
    <property type="entry name" value="KU"/>
    <property type="match status" value="1"/>
</dbReference>
<dbReference type="SUPFAM" id="SSF57362">
    <property type="entry name" value="BPTI-like"/>
    <property type="match status" value="1"/>
</dbReference>
<dbReference type="PROSITE" id="PS00280">
    <property type="entry name" value="BPTI_KUNITZ_1"/>
    <property type="match status" value="1"/>
</dbReference>
<dbReference type="PROSITE" id="PS50279">
    <property type="entry name" value="BPTI_KUNITZ_2"/>
    <property type="match status" value="1"/>
</dbReference>
<sequence length="57" mass="6574">AAKYCKLPVRYGPCKKKIPSFYYKWKAKQCLPFDYSGCGGNANRFKTIEECRRTCVG</sequence>
<keyword id="KW-0903">Direct protein sequencing</keyword>
<keyword id="KW-1015">Disulfide bond</keyword>
<keyword id="KW-0872">Ion channel impairing toxin</keyword>
<keyword id="KW-0528">Neurotoxin</keyword>
<keyword id="KW-0632">Potassium channel impairing toxin</keyword>
<keyword id="KW-0964">Secreted</keyword>
<keyword id="KW-0800">Toxin</keyword>
<keyword id="KW-1220">Voltage-gated potassium channel impairing toxin</keyword>
<protein>
    <recommendedName>
        <fullName>Kunitz-type serine protease inhibitor homolog delta-dendrotoxin</fullName>
        <shortName>Delta-DTX</shortName>
    </recommendedName>
    <alternativeName>
        <fullName>Dendrotoxin delta-DaTX</fullName>
    </alternativeName>
    <alternativeName>
        <fullName>Protease inhibitor K</fullName>
    </alternativeName>
    <alternativeName>
        <fullName>Toxin C13S1C3</fullName>
    </alternativeName>
    <alternativeName>
        <fullName>Venom basic protease inhibitor K</fullName>
    </alternativeName>
</protein>
<accession>P00982</accession>
<evidence type="ECO:0000255" key="1">
    <source>
        <dbReference type="PROSITE-ProRule" id="PRU00031"/>
    </source>
</evidence>
<evidence type="ECO:0000269" key="2">
    <source>
    </source>
</evidence>
<evidence type="ECO:0000305" key="3"/>
<organism>
    <name type="scientific">Dendroaspis angusticeps</name>
    <name type="common">Eastern green mamba</name>
    <name type="synonym">Naja angusticeps</name>
    <dbReference type="NCBI Taxonomy" id="8618"/>
    <lineage>
        <taxon>Eukaryota</taxon>
        <taxon>Metazoa</taxon>
        <taxon>Chordata</taxon>
        <taxon>Craniata</taxon>
        <taxon>Vertebrata</taxon>
        <taxon>Euteleostomi</taxon>
        <taxon>Lepidosauria</taxon>
        <taxon>Squamata</taxon>
        <taxon>Bifurcata</taxon>
        <taxon>Unidentata</taxon>
        <taxon>Episquamata</taxon>
        <taxon>Toxicofera</taxon>
        <taxon>Serpentes</taxon>
        <taxon>Colubroidea</taxon>
        <taxon>Elapidae</taxon>
        <taxon>Elapinae</taxon>
        <taxon>Dendroaspis</taxon>
    </lineage>
</organism>
<proteinExistence type="evidence at protein level"/>